<organism>
    <name type="scientific">Salmonella typhimurium (strain LT2 / SGSC1412 / ATCC 700720)</name>
    <dbReference type="NCBI Taxonomy" id="99287"/>
    <lineage>
        <taxon>Bacteria</taxon>
        <taxon>Pseudomonadati</taxon>
        <taxon>Pseudomonadota</taxon>
        <taxon>Gammaproteobacteria</taxon>
        <taxon>Enterobacterales</taxon>
        <taxon>Enterobacteriaceae</taxon>
        <taxon>Salmonella</taxon>
    </lineage>
</organism>
<accession>P08005</accession>
<dbReference type="EMBL" id="X05491">
    <property type="protein sequence ID" value="CAA29040.1"/>
    <property type="molecule type" value="Genomic_DNA"/>
</dbReference>
<dbReference type="EMBL" id="AE006468">
    <property type="protein sequence ID" value="AAL20663.1"/>
    <property type="molecule type" value="Genomic_DNA"/>
</dbReference>
<dbReference type="PIR" id="B29333">
    <property type="entry name" value="QREBOB"/>
</dbReference>
<dbReference type="RefSeq" id="NP_460704.1">
    <property type="nucleotide sequence ID" value="NC_003197.2"/>
</dbReference>
<dbReference type="RefSeq" id="WP_000911097.1">
    <property type="nucleotide sequence ID" value="NC_003197.2"/>
</dbReference>
<dbReference type="SMR" id="P08005"/>
<dbReference type="STRING" id="99287.STM1745"/>
<dbReference type="TCDB" id="3.A.1.5.1">
    <property type="family name" value="the atp-binding cassette (abc) superfamily"/>
</dbReference>
<dbReference type="PaxDb" id="99287-STM1745"/>
<dbReference type="GeneID" id="1253264"/>
<dbReference type="KEGG" id="stm:STM1745"/>
<dbReference type="PATRIC" id="fig|99287.12.peg.1842"/>
<dbReference type="HOGENOM" id="CLU_036879_0_0_6"/>
<dbReference type="OMA" id="IPMWWFG"/>
<dbReference type="PhylomeDB" id="P08005"/>
<dbReference type="BioCyc" id="SENT99287:STM1745-MONOMER"/>
<dbReference type="Proteomes" id="UP000001014">
    <property type="component" value="Chromosome"/>
</dbReference>
<dbReference type="GO" id="GO:0005886">
    <property type="term" value="C:plasma membrane"/>
    <property type="evidence" value="ECO:0000318"/>
    <property type="project" value="GO_Central"/>
</dbReference>
<dbReference type="GO" id="GO:0015640">
    <property type="term" value="F:peptidoglycan peptide transmembrane transporter activity"/>
    <property type="evidence" value="ECO:0000318"/>
    <property type="project" value="GO_Central"/>
</dbReference>
<dbReference type="GO" id="GO:0015031">
    <property type="term" value="P:protein transport"/>
    <property type="evidence" value="ECO:0007669"/>
    <property type="project" value="UniProtKB-KW"/>
</dbReference>
<dbReference type="CDD" id="cd06261">
    <property type="entry name" value="TM_PBP2"/>
    <property type="match status" value="1"/>
</dbReference>
<dbReference type="FunFam" id="1.10.3720.10:FF:000016">
    <property type="entry name" value="Oligopeptide transport system permease OppB"/>
    <property type="match status" value="1"/>
</dbReference>
<dbReference type="Gene3D" id="1.10.3720.10">
    <property type="entry name" value="MetI-like"/>
    <property type="match status" value="1"/>
</dbReference>
<dbReference type="InterPro" id="IPR045621">
    <property type="entry name" value="BPD_transp_1_N"/>
</dbReference>
<dbReference type="InterPro" id="IPR000515">
    <property type="entry name" value="MetI-like"/>
</dbReference>
<dbReference type="InterPro" id="IPR035906">
    <property type="entry name" value="MetI-like_sf"/>
</dbReference>
<dbReference type="NCBIfam" id="NF007008">
    <property type="entry name" value="PRK09471.1"/>
    <property type="match status" value="1"/>
</dbReference>
<dbReference type="PANTHER" id="PTHR43163">
    <property type="entry name" value="DIPEPTIDE TRANSPORT SYSTEM PERMEASE PROTEIN DPPB-RELATED"/>
    <property type="match status" value="1"/>
</dbReference>
<dbReference type="PANTHER" id="PTHR43163:SF6">
    <property type="entry name" value="DIPEPTIDE TRANSPORT SYSTEM PERMEASE PROTEIN DPPB-RELATED"/>
    <property type="match status" value="1"/>
</dbReference>
<dbReference type="Pfam" id="PF00528">
    <property type="entry name" value="BPD_transp_1"/>
    <property type="match status" value="1"/>
</dbReference>
<dbReference type="Pfam" id="PF19300">
    <property type="entry name" value="BPD_transp_1_N"/>
    <property type="match status" value="1"/>
</dbReference>
<dbReference type="SUPFAM" id="SSF161098">
    <property type="entry name" value="MetI-like"/>
    <property type="match status" value="1"/>
</dbReference>
<dbReference type="PROSITE" id="PS50928">
    <property type="entry name" value="ABC_TM1"/>
    <property type="match status" value="1"/>
</dbReference>
<proteinExistence type="evidence at protein level"/>
<protein>
    <recommendedName>
        <fullName evidence="7">Oligopeptide transport system permease protein OppB</fullName>
    </recommendedName>
</protein>
<reference key="1">
    <citation type="journal article" date="1987" name="J. Mol. Biol.">
        <title>Molecular characterization of the oligopeptide permease of Salmonella typhimurium.</title>
        <authorList>
            <person name="Hiles I.D."/>
            <person name="Gallagher M.P."/>
            <person name="Jamieson D.J."/>
            <person name="Higgins C.F."/>
        </authorList>
    </citation>
    <scope>NUCLEOTIDE SEQUENCE [GENOMIC DNA]</scope>
    <scope>FUNCTION</scope>
    <scope>SUBUNIT</scope>
    <scope>SUBCELLULAR LOCATION</scope>
    <scope>INDUCTION</scope>
    <source>
        <strain>LT2</strain>
    </source>
</reference>
<reference key="2">
    <citation type="journal article" date="2001" name="Nature">
        <title>Complete genome sequence of Salmonella enterica serovar Typhimurium LT2.</title>
        <authorList>
            <person name="McClelland M."/>
            <person name="Sanderson K.E."/>
            <person name="Spieth J."/>
            <person name="Clifton S.W."/>
            <person name="Latreille P."/>
            <person name="Courtney L."/>
            <person name="Porwollik S."/>
            <person name="Ali J."/>
            <person name="Dante M."/>
            <person name="Du F."/>
            <person name="Hou S."/>
            <person name="Layman D."/>
            <person name="Leonard S."/>
            <person name="Nguyen C."/>
            <person name="Scott K."/>
            <person name="Holmes A."/>
            <person name="Grewal N."/>
            <person name="Mulvaney E."/>
            <person name="Ryan E."/>
            <person name="Sun H."/>
            <person name="Florea L."/>
            <person name="Miller W."/>
            <person name="Stoneking T."/>
            <person name="Nhan M."/>
            <person name="Waterston R."/>
            <person name="Wilson R.K."/>
        </authorList>
    </citation>
    <scope>NUCLEOTIDE SEQUENCE [LARGE SCALE GENOMIC DNA]</scope>
    <source>
        <strain>LT2 / SGSC1412 / ATCC 700720</strain>
    </source>
</reference>
<reference key="3">
    <citation type="journal article" date="1987" name="J. Bacteriol.">
        <title>Uptake of cell wall peptides by Salmonella typhimurium and Escherichia coli.</title>
        <authorList>
            <person name="Goodell E.W."/>
            <person name="Higgins C.F."/>
        </authorList>
    </citation>
    <scope>FUNCTION</scope>
    <scope>DISRUPTION PHENOTYPE</scope>
    <source>
        <strain>LT2</strain>
    </source>
</reference>
<reference key="4">
    <citation type="journal article" date="1992" name="Mol. Microbiol.">
        <title>Membrane topology of the integral membrane components, OppB and OppC, of the oligopeptide permease of Salmonella typhimurium.</title>
        <authorList>
            <person name="Pearce S.R."/>
            <person name="Mimmack M.L."/>
            <person name="Gallagher M.P."/>
            <person name="Gileadi U."/>
            <person name="Hyde S.C."/>
            <person name="Higgins C.F."/>
        </authorList>
    </citation>
    <scope>FUNCTION</scope>
    <scope>SUBCELLULAR LOCATION</scope>
    <scope>TOPOLOGY</scope>
</reference>
<gene>
    <name evidence="6" type="primary">oppB</name>
    <name type="ordered locus">STM1745</name>
</gene>
<name>OPPB_SALTY</name>
<sequence>MLKFILRRCLEAIPTLFILITISFFMMRLAPGSPFTGERALPPEVLANIEAKYHLNDPIMTQYFSYLKQLAHGDFGPSFKYKDYTVNDLVAASFPVSAKLGAAAFLLAVIIGVSAGVIAALKQNTRWDYTVMGFAMTGVVIPSFVVAPLLVMVFAITLQWLPGGGWNGGALKFMILPMVALSLAYIASIARITRGSMIEVLHSNFIRTARAKGLPMRRIIFRHALKPALLPVLSYMGPAFVGIITGSMVIETIYGLPGIGQLFVNGALNRDYSLVLSLTILVGALTILFNAIVDVLYAVIDPKIRY</sequence>
<feature type="chain" id="PRO_0000060146" description="Oligopeptide transport system permease protein OppB">
    <location>
        <begin position="1"/>
        <end position="306"/>
    </location>
</feature>
<feature type="topological domain" description="Cytoplasmic" evidence="8">
    <location>
        <begin position="1"/>
        <end position="12"/>
    </location>
</feature>
<feature type="transmembrane region" description="Helical" evidence="1">
    <location>
        <begin position="13"/>
        <end position="30"/>
    </location>
</feature>
<feature type="topological domain" description="Periplasmic" evidence="8">
    <location>
        <begin position="31"/>
        <end position="101"/>
    </location>
</feature>
<feature type="transmembrane region" description="Helical" evidence="1">
    <location>
        <begin position="102"/>
        <end position="121"/>
    </location>
</feature>
<feature type="topological domain" description="Cytoplasmic" evidence="8">
    <location>
        <begin position="122"/>
        <end position="133"/>
    </location>
</feature>
<feature type="transmembrane region" description="Helical" evidence="1">
    <location>
        <begin position="134"/>
        <end position="156"/>
    </location>
</feature>
<feature type="topological domain" description="Periplasmic" evidence="8">
    <location>
        <begin position="157"/>
        <end position="165"/>
    </location>
</feature>
<feature type="transmembrane region" description="Helical" evidence="1">
    <location>
        <begin position="166"/>
        <end position="188"/>
    </location>
</feature>
<feature type="topological domain" description="Cytoplasmic" evidence="8">
    <location>
        <begin position="189"/>
        <end position="227"/>
    </location>
</feature>
<feature type="transmembrane region" description="Helical" evidence="1">
    <location>
        <begin position="228"/>
        <end position="250"/>
    </location>
</feature>
<feature type="topological domain" description="Periplasmic" evidence="8">
    <location>
        <begin position="251"/>
        <end position="277"/>
    </location>
</feature>
<feature type="transmembrane region" description="Helical" evidence="1">
    <location>
        <begin position="278"/>
        <end position="300"/>
    </location>
</feature>
<feature type="topological domain" description="Cytoplasmic" evidence="8">
    <location>
        <begin position="301"/>
        <end position="306"/>
    </location>
</feature>
<feature type="domain" description="ABC transmembrane type-1" evidence="2">
    <location>
        <begin position="94"/>
        <end position="293"/>
    </location>
</feature>
<keyword id="KW-0997">Cell inner membrane</keyword>
<keyword id="KW-1003">Cell membrane</keyword>
<keyword id="KW-0472">Membrane</keyword>
<keyword id="KW-0571">Peptide transport</keyword>
<keyword id="KW-0653">Protein transport</keyword>
<keyword id="KW-1185">Reference proteome</keyword>
<keyword id="KW-0812">Transmembrane</keyword>
<keyword id="KW-1133">Transmembrane helix</keyword>
<keyword id="KW-0813">Transport</keyword>
<evidence type="ECO:0000255" key="1"/>
<evidence type="ECO:0000255" key="2">
    <source>
        <dbReference type="PROSITE-ProRule" id="PRU00441"/>
    </source>
</evidence>
<evidence type="ECO:0000269" key="3">
    <source>
    </source>
</evidence>
<evidence type="ECO:0000269" key="4">
    <source>
    </source>
</evidence>
<evidence type="ECO:0000269" key="5">
    <source>
    </source>
</evidence>
<evidence type="ECO:0000303" key="6">
    <source>
    </source>
</evidence>
<evidence type="ECO:0000305" key="7"/>
<evidence type="ECO:0000305" key="8">
    <source>
    </source>
</evidence>
<comment type="function">
    <text evidence="3 4 5">Part of the ABC transporter complex OppABCDF involved in the uptake of oligopeptides, including the cell wall murein tripeptide L-alanyl-gamma-D-glutamyl-meso-diaminopimelate (PubMed:2821267, PubMed:3301822). Responsible for the translocation of the substrate across the membrane (PubMed:1738314). Plays an important nutritional role and is involved in the recycling of cell wall peptides (PubMed:2821267, PubMed:3301822).</text>
</comment>
<comment type="subunit">
    <text evidence="4">The complex is composed of two ATP-binding proteins (OppD and OppF), two transmembrane proteins (OppB and OppC) and a solute-binding protein (OppA).</text>
</comment>
<comment type="subcellular location">
    <subcellularLocation>
        <location evidence="3 4">Cell inner membrane</location>
        <topology evidence="3">Multi-pass membrane protein</topology>
    </subcellularLocation>
</comment>
<comment type="induction">
    <text evidence="4">Part of the opp operon, which is constitutively expressed.</text>
</comment>
<comment type="disruption phenotype">
    <text evidence="5">Double mutant oppB-oppC cannot take up cell wall peptides.</text>
</comment>
<comment type="similarity">
    <text evidence="7">Belongs to the binding-protein-dependent transport system permease family. OppBC subfamily.</text>
</comment>